<keyword id="KW-1185">Reference proteome</keyword>
<keyword id="KW-0687">Ribonucleoprotein</keyword>
<keyword id="KW-0689">Ribosomal protein</keyword>
<keyword id="KW-0694">RNA-binding</keyword>
<keyword id="KW-0699">rRNA-binding</keyword>
<comment type="function">
    <text evidence="1">Forms part of the ribosomal stalk, playing a central role in the interaction of the ribosome with GTP-bound translation factors.</text>
</comment>
<comment type="subunit">
    <text evidence="1">Part of the ribosomal stalk of the 50S ribosomal subunit. The N-terminus interacts with L11 and the large rRNA to form the base of the stalk. The C-terminus forms an elongated spine to which L12 dimers bind in a sequential fashion forming a multimeric L10(L12)X complex.</text>
</comment>
<comment type="similarity">
    <text evidence="1">Belongs to the universal ribosomal protein uL10 family.</text>
</comment>
<feature type="chain" id="PRO_0000154649" description="Large ribosomal subunit protein uL10">
    <location>
        <begin position="1"/>
        <end position="177"/>
    </location>
</feature>
<organism>
    <name type="scientific">Legionella pneumophila subsp. pneumophila (strain Philadelphia 1 / ATCC 33152 / DSM 7513)</name>
    <dbReference type="NCBI Taxonomy" id="272624"/>
    <lineage>
        <taxon>Bacteria</taxon>
        <taxon>Pseudomonadati</taxon>
        <taxon>Pseudomonadota</taxon>
        <taxon>Gammaproteobacteria</taxon>
        <taxon>Legionellales</taxon>
        <taxon>Legionellaceae</taxon>
        <taxon>Legionella</taxon>
    </lineage>
</organism>
<accession>Q5ZYQ2</accession>
<protein>
    <recommendedName>
        <fullName evidence="1">Large ribosomal subunit protein uL10</fullName>
    </recommendedName>
    <alternativeName>
        <fullName evidence="2">50S ribosomal protein L10</fullName>
    </alternativeName>
</protein>
<sequence>MTLNLAAKKAVVEEVTAVASKAISAVVADYRGLTVNQMTQLRSEARKSGVYLRVVRNTLTRRAFKNTEFECLNDLLVGPVFIALSLEAPSDAARLLKDYAKTFEKLEIRALSVGGKVYNANQIDAVASLPTRDEAISKLMYVMKAPIEKFVRTLAEPHAKLARTLAAVKDKKAGNPA</sequence>
<reference key="1">
    <citation type="journal article" date="2004" name="Science">
        <title>The genomic sequence of the accidental pathogen Legionella pneumophila.</title>
        <authorList>
            <person name="Chien M."/>
            <person name="Morozova I."/>
            <person name="Shi S."/>
            <person name="Sheng H."/>
            <person name="Chen J."/>
            <person name="Gomez S.M."/>
            <person name="Asamani G."/>
            <person name="Hill K."/>
            <person name="Nuara J."/>
            <person name="Feder M."/>
            <person name="Rineer J."/>
            <person name="Greenberg J.J."/>
            <person name="Steshenko V."/>
            <person name="Park S.H."/>
            <person name="Zhao B."/>
            <person name="Teplitskaya E."/>
            <person name="Edwards J.R."/>
            <person name="Pampou S."/>
            <person name="Georghiou A."/>
            <person name="Chou I.-C."/>
            <person name="Iannuccilli W."/>
            <person name="Ulz M.E."/>
            <person name="Kim D.H."/>
            <person name="Geringer-Sameth A."/>
            <person name="Goldsberry C."/>
            <person name="Morozov P."/>
            <person name="Fischer S.G."/>
            <person name="Segal G."/>
            <person name="Qu X."/>
            <person name="Rzhetsky A."/>
            <person name="Zhang P."/>
            <person name="Cayanis E."/>
            <person name="De Jong P.J."/>
            <person name="Ju J."/>
            <person name="Kalachikov S."/>
            <person name="Shuman H.A."/>
            <person name="Russo J.J."/>
        </authorList>
    </citation>
    <scope>NUCLEOTIDE SEQUENCE [LARGE SCALE GENOMIC DNA]</scope>
    <source>
        <strain>Philadelphia 1 / ATCC 33152 / DSM 7513</strain>
    </source>
</reference>
<proteinExistence type="inferred from homology"/>
<gene>
    <name evidence="1" type="primary">rplJ</name>
    <name type="ordered locus">lpg0320</name>
</gene>
<name>RL10_LEGPH</name>
<evidence type="ECO:0000255" key="1">
    <source>
        <dbReference type="HAMAP-Rule" id="MF_00362"/>
    </source>
</evidence>
<evidence type="ECO:0000305" key="2"/>
<dbReference type="EMBL" id="AE017354">
    <property type="protein sequence ID" value="AAU26417.1"/>
    <property type="molecule type" value="Genomic_DNA"/>
</dbReference>
<dbReference type="RefSeq" id="WP_010946071.1">
    <property type="nucleotide sequence ID" value="NC_002942.5"/>
</dbReference>
<dbReference type="RefSeq" id="YP_094364.1">
    <property type="nucleotide sequence ID" value="NC_002942.5"/>
</dbReference>
<dbReference type="SMR" id="Q5ZYQ2"/>
<dbReference type="STRING" id="272624.lpg0320"/>
<dbReference type="PaxDb" id="272624-lpg0320"/>
<dbReference type="GeneID" id="57034323"/>
<dbReference type="KEGG" id="lpn:lpg0320"/>
<dbReference type="PATRIC" id="fig|272624.6.peg.327"/>
<dbReference type="eggNOG" id="COG0244">
    <property type="taxonomic scope" value="Bacteria"/>
</dbReference>
<dbReference type="HOGENOM" id="CLU_092227_0_1_6"/>
<dbReference type="OrthoDB" id="9808307at2"/>
<dbReference type="Proteomes" id="UP000000609">
    <property type="component" value="Chromosome"/>
</dbReference>
<dbReference type="GO" id="GO:0015934">
    <property type="term" value="C:large ribosomal subunit"/>
    <property type="evidence" value="ECO:0007669"/>
    <property type="project" value="InterPro"/>
</dbReference>
<dbReference type="GO" id="GO:0070180">
    <property type="term" value="F:large ribosomal subunit rRNA binding"/>
    <property type="evidence" value="ECO:0007669"/>
    <property type="project" value="UniProtKB-UniRule"/>
</dbReference>
<dbReference type="GO" id="GO:0003735">
    <property type="term" value="F:structural constituent of ribosome"/>
    <property type="evidence" value="ECO:0007669"/>
    <property type="project" value="InterPro"/>
</dbReference>
<dbReference type="GO" id="GO:0006412">
    <property type="term" value="P:translation"/>
    <property type="evidence" value="ECO:0007669"/>
    <property type="project" value="UniProtKB-UniRule"/>
</dbReference>
<dbReference type="CDD" id="cd05797">
    <property type="entry name" value="Ribosomal_L10"/>
    <property type="match status" value="1"/>
</dbReference>
<dbReference type="Gene3D" id="3.30.70.1730">
    <property type="match status" value="1"/>
</dbReference>
<dbReference type="Gene3D" id="6.10.250.290">
    <property type="match status" value="1"/>
</dbReference>
<dbReference type="HAMAP" id="MF_00362">
    <property type="entry name" value="Ribosomal_uL10"/>
    <property type="match status" value="1"/>
</dbReference>
<dbReference type="InterPro" id="IPR001790">
    <property type="entry name" value="Ribosomal_uL10"/>
</dbReference>
<dbReference type="InterPro" id="IPR043141">
    <property type="entry name" value="Ribosomal_uL10-like_sf"/>
</dbReference>
<dbReference type="InterPro" id="IPR022973">
    <property type="entry name" value="Ribosomal_uL10_bac"/>
</dbReference>
<dbReference type="InterPro" id="IPR047865">
    <property type="entry name" value="Ribosomal_uL10_bac_type"/>
</dbReference>
<dbReference type="InterPro" id="IPR002363">
    <property type="entry name" value="Ribosomal_uL10_CS_bac"/>
</dbReference>
<dbReference type="NCBIfam" id="NF000955">
    <property type="entry name" value="PRK00099.1-1"/>
    <property type="match status" value="1"/>
</dbReference>
<dbReference type="PANTHER" id="PTHR11560">
    <property type="entry name" value="39S RIBOSOMAL PROTEIN L10, MITOCHONDRIAL"/>
    <property type="match status" value="1"/>
</dbReference>
<dbReference type="Pfam" id="PF00466">
    <property type="entry name" value="Ribosomal_L10"/>
    <property type="match status" value="1"/>
</dbReference>
<dbReference type="SUPFAM" id="SSF160369">
    <property type="entry name" value="Ribosomal protein L10-like"/>
    <property type="match status" value="1"/>
</dbReference>
<dbReference type="PROSITE" id="PS01109">
    <property type="entry name" value="RIBOSOMAL_L10"/>
    <property type="match status" value="1"/>
</dbReference>